<sequence length="650" mass="73954">MASNMDREMILADFQACTGIENIDEAITLLEQNNWDLVAAINGVIPQENGILQSEYGGETIPGPAFNPASHPASAPTSSSSSAFRPVMPSRQIVERQPRMLDFRVEYRDRNVDVVLEDTCTVGEIKQILENELQIPVSKMLLKGWKTGDVEDSTVLKSLHLPKNNSLYVLTPDLPPPSSSSHAGALQESLNQNFMLIITHREVQREYNLNFSGSSTIQEVKRNVYDLTSIPVRHQLWEGWPTSATDDSMCLAESGLSYPCHRLTVGRRSSPAQTREQSEEQITDVHMVSDSDGDDFEDATEFGVDDGEVFGMASSALRKSPMMPENAENEGDALLQFTAEFSSRYGDCHPVFFIGSLEAAFQEAFYVKARDRKLLAIYLHHDESVLTNVFCSQMLCAESIVSYLSQNFITWAWDLTKDSNRARFLTMCNRHFGSVVAQTIRTQKTDQFPLFLIIMGKRSSNEVLNVIQGNTTVDELMMRLMAAMEIFTAQQQEDIKDEDEREARENVKREQDEAYRLSLEADRAKREAHEREMAEQFRLEQIRKEQEEEREAIRLSLEQALPPEPKEENAEPVSKLRIRTPSGEFLERRFLASNKLQIVFDFVASKGFPWDEYKLLSTFPRRDVTQLDPNKSLLEVKLFPQETLFLEAKE</sequence>
<accession>Q9UNN5</accession>
<accession>Q549F0</accession>
<accession>Q9UF34</accession>
<accession>Q9UNT3</accession>
<accession>Q9Y2Z3</accession>
<keyword id="KW-0002">3D-structure</keyword>
<keyword id="KW-0025">Alternative splicing</keyword>
<keyword id="KW-0053">Apoptosis</keyword>
<keyword id="KW-0539">Nucleus</keyword>
<keyword id="KW-0597">Phosphoprotein</keyword>
<keyword id="KW-1267">Proteomics identification</keyword>
<keyword id="KW-1185">Reference proteome</keyword>
<proteinExistence type="evidence at protein level"/>
<evidence type="ECO:0000250" key="1">
    <source>
        <dbReference type="UniProtKB" id="P54731"/>
    </source>
</evidence>
<evidence type="ECO:0000255" key="2">
    <source>
        <dbReference type="PROSITE-ProRule" id="PRU00215"/>
    </source>
</evidence>
<evidence type="ECO:0000256" key="3">
    <source>
        <dbReference type="SAM" id="MobiDB-lite"/>
    </source>
</evidence>
<evidence type="ECO:0000269" key="4">
    <source>
    </source>
</evidence>
<evidence type="ECO:0000269" key="5">
    <source>
    </source>
</evidence>
<evidence type="ECO:0000269" key="6">
    <source>
    </source>
</evidence>
<evidence type="ECO:0000269" key="7">
    <source>
    </source>
</evidence>
<evidence type="ECO:0000303" key="8">
    <source>
    </source>
</evidence>
<evidence type="ECO:0000305" key="9"/>
<evidence type="ECO:0007744" key="10">
    <source>
    </source>
</evidence>
<evidence type="ECO:0007744" key="11">
    <source>
    </source>
</evidence>
<evidence type="ECO:0007744" key="12">
    <source>
    </source>
</evidence>
<evidence type="ECO:0007744" key="13">
    <source>
    </source>
</evidence>
<evidence type="ECO:0007829" key="14">
    <source>
        <dbReference type="PDB" id="2DZM"/>
    </source>
</evidence>
<evidence type="ECO:0007829" key="15">
    <source>
        <dbReference type="PDB" id="2EC4"/>
    </source>
</evidence>
<evidence type="ECO:0007829" key="16">
    <source>
        <dbReference type="PDB" id="3E21"/>
    </source>
</evidence>
<evidence type="ECO:0007829" key="17">
    <source>
        <dbReference type="PDB" id="3QX1"/>
    </source>
</evidence>
<evidence type="ECO:0007829" key="18">
    <source>
        <dbReference type="PDB" id="7FGN"/>
    </source>
</evidence>
<protein>
    <recommendedName>
        <fullName>FAS-associated factor 1</fullName>
        <shortName>hFAF1</shortName>
    </recommendedName>
    <alternativeName>
        <fullName>UBX domain-containing protein 12</fullName>
    </alternativeName>
    <alternativeName>
        <fullName>UBX domain-containing protein 3A</fullName>
    </alternativeName>
</protein>
<dbReference type="EMBL" id="AF106798">
    <property type="protein sequence ID" value="AAD51886.1"/>
    <property type="molecule type" value="mRNA"/>
</dbReference>
<dbReference type="EMBL" id="AF094700">
    <property type="protein sequence ID" value="AAD51876.1"/>
    <property type="status" value="ALT_INIT"/>
    <property type="molecule type" value="mRNA"/>
</dbReference>
<dbReference type="EMBL" id="AF136173">
    <property type="protein sequence ID" value="AAP97263.1"/>
    <property type="molecule type" value="mRNA"/>
</dbReference>
<dbReference type="EMBL" id="AJ271408">
    <property type="protein sequence ID" value="CAB67705.1"/>
    <property type="molecule type" value="mRNA"/>
</dbReference>
<dbReference type="EMBL" id="AF132938">
    <property type="protein sequence ID" value="AAD27713.1"/>
    <property type="molecule type" value="mRNA"/>
</dbReference>
<dbReference type="EMBL" id="AC091610">
    <property type="status" value="NOT_ANNOTATED_CDS"/>
    <property type="molecule type" value="Genomic_DNA"/>
</dbReference>
<dbReference type="EMBL" id="AC118557">
    <property type="status" value="NOT_ANNOTATED_CDS"/>
    <property type="molecule type" value="Genomic_DNA"/>
</dbReference>
<dbReference type="EMBL" id="AL049637">
    <property type="status" value="NOT_ANNOTATED_CDS"/>
    <property type="molecule type" value="Genomic_DNA"/>
</dbReference>
<dbReference type="EMBL" id="AL359977">
    <property type="status" value="NOT_ANNOTATED_CDS"/>
    <property type="molecule type" value="Genomic_DNA"/>
</dbReference>
<dbReference type="EMBL" id="AL603746">
    <property type="status" value="NOT_ANNOTATED_CDS"/>
    <property type="molecule type" value="Genomic_DNA"/>
</dbReference>
<dbReference type="EMBL" id="CH471059">
    <property type="protein sequence ID" value="EAX06837.1"/>
    <property type="molecule type" value="Genomic_DNA"/>
</dbReference>
<dbReference type="EMBL" id="BC004970">
    <property type="protein sequence ID" value="AAH04970.1"/>
    <property type="molecule type" value="mRNA"/>
</dbReference>
<dbReference type="EMBL" id="BC067100">
    <property type="protein sequence ID" value="AAH67100.1"/>
    <property type="molecule type" value="mRNA"/>
</dbReference>
<dbReference type="EMBL" id="AL133631">
    <property type="protein sequence ID" value="CAB63755.1"/>
    <property type="molecule type" value="mRNA"/>
</dbReference>
<dbReference type="CCDS" id="CCDS554.1">
    <molecule id="Q9UNN5-1"/>
</dbReference>
<dbReference type="PIR" id="JC7093">
    <property type="entry name" value="JC7093"/>
</dbReference>
<dbReference type="PIR" id="T43466">
    <property type="entry name" value="T43466"/>
</dbReference>
<dbReference type="RefSeq" id="NP_008982.1">
    <molecule id="Q9UNN5-1"/>
    <property type="nucleotide sequence ID" value="NM_007051.3"/>
</dbReference>
<dbReference type="PDB" id="1H8C">
    <property type="method" value="NMR"/>
    <property type="chains" value="A=569-650"/>
</dbReference>
<dbReference type="PDB" id="2DZM">
    <property type="method" value="NMR"/>
    <property type="chains" value="A=99-191"/>
</dbReference>
<dbReference type="PDB" id="2EC4">
    <property type="method" value="NMR"/>
    <property type="chains" value="A=325-495"/>
</dbReference>
<dbReference type="PDB" id="3E21">
    <property type="method" value="X-ray"/>
    <property type="resolution" value="1.73 A"/>
    <property type="chains" value="A=5-47"/>
</dbReference>
<dbReference type="PDB" id="3QC8">
    <property type="method" value="X-ray"/>
    <property type="resolution" value="2.20 A"/>
    <property type="chains" value="B=571-650"/>
</dbReference>
<dbReference type="PDB" id="3QCA">
    <property type="method" value="X-ray"/>
    <property type="resolution" value="2.90 A"/>
    <property type="chains" value="A/B/C/D=571-650"/>
</dbReference>
<dbReference type="PDB" id="3QQ8">
    <property type="method" value="X-ray"/>
    <property type="resolution" value="2.00 A"/>
    <property type="chains" value="B=568-650"/>
</dbReference>
<dbReference type="PDB" id="3QWZ">
    <property type="method" value="X-ray"/>
    <property type="resolution" value="2.00 A"/>
    <property type="chains" value="B=571-650"/>
</dbReference>
<dbReference type="PDB" id="3QX1">
    <property type="method" value="X-ray"/>
    <property type="resolution" value="1.60 A"/>
    <property type="chains" value="A/B=571-650"/>
</dbReference>
<dbReference type="PDB" id="3R3M">
    <property type="method" value="X-ray"/>
    <property type="resolution" value="3.00 A"/>
    <property type="chains" value="A/B/C/D=568-650"/>
</dbReference>
<dbReference type="PDB" id="7FGM">
    <property type="method" value="X-ray"/>
    <property type="resolution" value="2.20 A"/>
    <property type="chains" value="B=91-171"/>
</dbReference>
<dbReference type="PDB" id="7FGN">
    <property type="method" value="X-ray"/>
    <property type="resolution" value="1.20 A"/>
    <property type="chains" value="A=100-174"/>
</dbReference>
<dbReference type="PDB" id="8KG2">
    <property type="method" value="X-ray"/>
    <property type="resolution" value="3.10 A"/>
    <property type="chains" value="M/N/O/P/Q/R/S/T/U/V/W/X=575-650"/>
</dbReference>
<dbReference type="PDBsum" id="1H8C"/>
<dbReference type="PDBsum" id="2DZM"/>
<dbReference type="PDBsum" id="2EC4"/>
<dbReference type="PDBsum" id="3E21"/>
<dbReference type="PDBsum" id="3QC8"/>
<dbReference type="PDBsum" id="3QCA"/>
<dbReference type="PDBsum" id="3QQ8"/>
<dbReference type="PDBsum" id="3QWZ"/>
<dbReference type="PDBsum" id="3QX1"/>
<dbReference type="PDBsum" id="3R3M"/>
<dbReference type="PDBsum" id="7FGM"/>
<dbReference type="PDBsum" id="7FGN"/>
<dbReference type="PDBsum" id="8KG2"/>
<dbReference type="BMRB" id="Q9UNN5"/>
<dbReference type="SMR" id="Q9UNN5"/>
<dbReference type="BioGRID" id="116298">
    <property type="interactions" value="339"/>
</dbReference>
<dbReference type="ComplexPortal" id="CPX-8095">
    <property type="entry name" value="VCP-FAF1 AAA ATPase complex"/>
</dbReference>
<dbReference type="ComplexPortal" id="CPX-8096">
    <property type="entry name" value="VCP-NPL4-UFD1-FAF1 AAA ATPase complex"/>
</dbReference>
<dbReference type="CORUM" id="Q9UNN5"/>
<dbReference type="DIP" id="DIP-38245N"/>
<dbReference type="FunCoup" id="Q9UNN5">
    <property type="interactions" value="3613"/>
</dbReference>
<dbReference type="IntAct" id="Q9UNN5">
    <property type="interactions" value="75"/>
</dbReference>
<dbReference type="MINT" id="Q9UNN5"/>
<dbReference type="STRING" id="9606.ENSP00000379457"/>
<dbReference type="ChEMBL" id="CHEMBL3758063"/>
<dbReference type="GlyCosmos" id="Q9UNN5">
    <property type="glycosylation" value="2 sites, 1 glycan"/>
</dbReference>
<dbReference type="GlyGen" id="Q9UNN5">
    <property type="glycosylation" value="3 sites, 1 N-linked glycan (1 site), 1 O-linked glycan (2 sites)"/>
</dbReference>
<dbReference type="iPTMnet" id="Q9UNN5"/>
<dbReference type="PhosphoSitePlus" id="Q9UNN5"/>
<dbReference type="BioMuta" id="FAF1"/>
<dbReference type="DMDM" id="20454906"/>
<dbReference type="jPOST" id="Q9UNN5"/>
<dbReference type="MassIVE" id="Q9UNN5"/>
<dbReference type="PaxDb" id="9606-ENSP00000379457"/>
<dbReference type="PeptideAtlas" id="Q9UNN5"/>
<dbReference type="ProteomicsDB" id="85315">
    <molecule id="Q9UNN5-1"/>
</dbReference>
<dbReference type="ProteomicsDB" id="85316">
    <molecule id="Q9UNN5-2"/>
</dbReference>
<dbReference type="Pumba" id="Q9UNN5"/>
<dbReference type="Antibodypedia" id="18936">
    <property type="antibodies" value="423 antibodies from 41 providers"/>
</dbReference>
<dbReference type="CPTC" id="Q9UNN5">
    <property type="antibodies" value="3 antibodies"/>
</dbReference>
<dbReference type="DNASU" id="11124"/>
<dbReference type="Ensembl" id="ENST00000396153.7">
    <molecule id="Q9UNN5-1"/>
    <property type="protein sequence ID" value="ENSP00000379457.2"/>
    <property type="gene ID" value="ENSG00000185104.21"/>
</dbReference>
<dbReference type="GeneID" id="11124"/>
<dbReference type="KEGG" id="hsa:11124"/>
<dbReference type="MANE-Select" id="ENST00000396153.7">
    <property type="protein sequence ID" value="ENSP00000379457.2"/>
    <property type="RefSeq nucleotide sequence ID" value="NM_007051.3"/>
    <property type="RefSeq protein sequence ID" value="NP_008982.1"/>
</dbReference>
<dbReference type="UCSC" id="uc001cse.2">
    <molecule id="Q9UNN5-1"/>
    <property type="organism name" value="human"/>
</dbReference>
<dbReference type="AGR" id="HGNC:3578"/>
<dbReference type="CTD" id="11124"/>
<dbReference type="DisGeNET" id="11124"/>
<dbReference type="GeneCards" id="FAF1"/>
<dbReference type="HGNC" id="HGNC:3578">
    <property type="gene designation" value="FAF1"/>
</dbReference>
<dbReference type="HPA" id="ENSG00000185104">
    <property type="expression patterns" value="Low tissue specificity"/>
</dbReference>
<dbReference type="MalaCards" id="FAF1"/>
<dbReference type="MIM" id="604460">
    <property type="type" value="gene"/>
</dbReference>
<dbReference type="neXtProt" id="NX_Q9UNN5"/>
<dbReference type="OpenTargets" id="ENSG00000185104"/>
<dbReference type="PharmGKB" id="PA27976"/>
<dbReference type="VEuPathDB" id="HostDB:ENSG00000185104"/>
<dbReference type="eggNOG" id="KOG1363">
    <property type="taxonomic scope" value="Eukaryota"/>
</dbReference>
<dbReference type="GeneTree" id="ENSGT00940000154831"/>
<dbReference type="HOGENOM" id="CLU_028119_0_0_1"/>
<dbReference type="InParanoid" id="Q9UNN5"/>
<dbReference type="OMA" id="YEGCKTI"/>
<dbReference type="OrthoDB" id="1920064at2759"/>
<dbReference type="PAN-GO" id="Q9UNN5">
    <property type="GO annotations" value="6 GO annotations based on evolutionary models"/>
</dbReference>
<dbReference type="PhylomeDB" id="Q9UNN5"/>
<dbReference type="TreeFam" id="TF314172"/>
<dbReference type="PathwayCommons" id="Q9UNN5"/>
<dbReference type="SignaLink" id="Q9UNN5"/>
<dbReference type="SIGNOR" id="Q9UNN5"/>
<dbReference type="BioGRID-ORCS" id="11124">
    <property type="hits" value="21 hits in 1163 CRISPR screens"/>
</dbReference>
<dbReference type="ChiTaRS" id="FAF1">
    <property type="organism name" value="human"/>
</dbReference>
<dbReference type="EvolutionaryTrace" id="Q9UNN5"/>
<dbReference type="GeneWiki" id="FAF1"/>
<dbReference type="GenomeRNAi" id="11124"/>
<dbReference type="Pharos" id="Q9UNN5">
    <property type="development level" value="Tbio"/>
</dbReference>
<dbReference type="PRO" id="PR:Q9UNN5"/>
<dbReference type="Proteomes" id="UP000005640">
    <property type="component" value="Chromosome 1"/>
</dbReference>
<dbReference type="RNAct" id="Q9UNN5">
    <property type="molecule type" value="protein"/>
</dbReference>
<dbReference type="Bgee" id="ENSG00000185104">
    <property type="expression patterns" value="Expressed in gastrocnemius and 197 other cell types or tissues"/>
</dbReference>
<dbReference type="ExpressionAtlas" id="Q9UNN5">
    <property type="expression patterns" value="baseline and differential"/>
</dbReference>
<dbReference type="GO" id="GO:0031265">
    <property type="term" value="C:CD95 death-inducing signaling complex"/>
    <property type="evidence" value="ECO:0000303"/>
    <property type="project" value="UniProtKB"/>
</dbReference>
<dbReference type="GO" id="GO:0005829">
    <property type="term" value="C:cytosol"/>
    <property type="evidence" value="ECO:0000314"/>
    <property type="project" value="UniProtKB"/>
</dbReference>
<dbReference type="GO" id="GO:0005783">
    <property type="term" value="C:endoplasmic reticulum"/>
    <property type="evidence" value="ECO:0000318"/>
    <property type="project" value="GO_Central"/>
</dbReference>
<dbReference type="GO" id="GO:0005635">
    <property type="term" value="C:nuclear envelope"/>
    <property type="evidence" value="ECO:0007669"/>
    <property type="project" value="Ensembl"/>
</dbReference>
<dbReference type="GO" id="GO:0005654">
    <property type="term" value="C:nucleoplasm"/>
    <property type="evidence" value="ECO:0000314"/>
    <property type="project" value="HPA"/>
</dbReference>
<dbReference type="GO" id="GO:0005634">
    <property type="term" value="C:nucleus"/>
    <property type="evidence" value="ECO:0000314"/>
    <property type="project" value="UniProtKB"/>
</dbReference>
<dbReference type="GO" id="GO:1990917">
    <property type="term" value="C:ooplasm"/>
    <property type="evidence" value="ECO:0007669"/>
    <property type="project" value="Ensembl"/>
</dbReference>
<dbReference type="GO" id="GO:0048471">
    <property type="term" value="C:perinuclear region of cytoplasm"/>
    <property type="evidence" value="ECO:0000314"/>
    <property type="project" value="UniProtKB"/>
</dbReference>
<dbReference type="GO" id="GO:0034098">
    <property type="term" value="C:VCP-NPL4-UFD1 AAA ATPase complex"/>
    <property type="evidence" value="ECO:0000314"/>
    <property type="project" value="BHF-UCL"/>
</dbReference>
<dbReference type="GO" id="GO:0031072">
    <property type="term" value="F:heat shock protein binding"/>
    <property type="evidence" value="ECO:0000314"/>
    <property type="project" value="UniProtKB"/>
</dbReference>
<dbReference type="GO" id="GO:0051059">
    <property type="term" value="F:NF-kappaB binding"/>
    <property type="evidence" value="ECO:0000353"/>
    <property type="project" value="UniProtKB"/>
</dbReference>
<dbReference type="GO" id="GO:0019904">
    <property type="term" value="F:protein domain specific binding"/>
    <property type="evidence" value="ECO:0007669"/>
    <property type="project" value="Ensembl"/>
</dbReference>
<dbReference type="GO" id="GO:0019901">
    <property type="term" value="F:protein kinase binding"/>
    <property type="evidence" value="ECO:0000314"/>
    <property type="project" value="UniProtKB"/>
</dbReference>
<dbReference type="GO" id="GO:0019887">
    <property type="term" value="F:protein kinase regulator activity"/>
    <property type="evidence" value="ECO:0000303"/>
    <property type="project" value="UniProtKB"/>
</dbReference>
<dbReference type="GO" id="GO:0043130">
    <property type="term" value="F:ubiquitin binding"/>
    <property type="evidence" value="ECO:0000314"/>
    <property type="project" value="BHF-UCL"/>
</dbReference>
<dbReference type="GO" id="GO:0031625">
    <property type="term" value="F:ubiquitin protein ligase binding"/>
    <property type="evidence" value="ECO:0000314"/>
    <property type="project" value="BHF-UCL"/>
</dbReference>
<dbReference type="GO" id="GO:0006915">
    <property type="term" value="P:apoptotic process"/>
    <property type="evidence" value="ECO:0007669"/>
    <property type="project" value="UniProtKB-KW"/>
</dbReference>
<dbReference type="GO" id="GO:0036503">
    <property type="term" value="P:ERAD pathway"/>
    <property type="evidence" value="ECO:0000318"/>
    <property type="project" value="GO_Central"/>
</dbReference>
<dbReference type="GO" id="GO:0036337">
    <property type="term" value="P:Fas signaling pathway"/>
    <property type="evidence" value="ECO:0000315"/>
    <property type="project" value="UniProtKB"/>
</dbReference>
<dbReference type="GO" id="GO:0043124">
    <property type="term" value="P:negative regulation of canonical NF-kappaB signal transduction"/>
    <property type="evidence" value="ECO:0000315"/>
    <property type="project" value="UniProtKB"/>
</dbReference>
<dbReference type="GO" id="GO:0043065">
    <property type="term" value="P:positive regulation of apoptotic process"/>
    <property type="evidence" value="ECO:0000303"/>
    <property type="project" value="UniProtKB"/>
</dbReference>
<dbReference type="GO" id="GO:0045740">
    <property type="term" value="P:positive regulation of DNA replication"/>
    <property type="evidence" value="ECO:0000315"/>
    <property type="project" value="UniProtKB"/>
</dbReference>
<dbReference type="GO" id="GO:1902043">
    <property type="term" value="P:positive regulation of extrinsic apoptotic signaling pathway via death domain receptors"/>
    <property type="evidence" value="ECO:0007669"/>
    <property type="project" value="Ensembl"/>
</dbReference>
<dbReference type="GO" id="GO:0045732">
    <property type="term" value="P:positive regulation of protein catabolic process"/>
    <property type="evidence" value="ECO:0000315"/>
    <property type="project" value="UniProtKB"/>
</dbReference>
<dbReference type="GO" id="GO:0043161">
    <property type="term" value="P:proteasome-mediated ubiquitin-dependent protein catabolic process"/>
    <property type="evidence" value="ECO:0000303"/>
    <property type="project" value="UniProtKB"/>
</dbReference>
<dbReference type="GO" id="GO:0030155">
    <property type="term" value="P:regulation of cell adhesion"/>
    <property type="evidence" value="ECO:0007669"/>
    <property type="project" value="Ensembl"/>
</dbReference>
<dbReference type="GO" id="GO:0042176">
    <property type="term" value="P:regulation of protein catabolic process"/>
    <property type="evidence" value="ECO:0000315"/>
    <property type="project" value="UniProtKB"/>
</dbReference>
<dbReference type="CDD" id="cd02990">
    <property type="entry name" value="UAS_FAF1"/>
    <property type="match status" value="1"/>
</dbReference>
<dbReference type="CDD" id="cd14413">
    <property type="entry name" value="UBA_FAF1"/>
    <property type="match status" value="1"/>
</dbReference>
<dbReference type="CDD" id="cd17129">
    <property type="entry name" value="Ubl1_FAF1"/>
    <property type="match status" value="1"/>
</dbReference>
<dbReference type="CDD" id="cd17056">
    <property type="entry name" value="Ubl_FAF1"/>
    <property type="match status" value="1"/>
</dbReference>
<dbReference type="CDD" id="cd01771">
    <property type="entry name" value="UBX_UBXN3A"/>
    <property type="match status" value="1"/>
</dbReference>
<dbReference type="FunFam" id="3.10.20.90:FF:000089">
    <property type="entry name" value="Fas associated factor 1"/>
    <property type="match status" value="1"/>
</dbReference>
<dbReference type="FunFam" id="3.10.20.90:FF:000122">
    <property type="entry name" value="Fas associated factor 1"/>
    <property type="match status" value="1"/>
</dbReference>
<dbReference type="FunFam" id="3.10.20.90:FF:000137">
    <property type="entry name" value="Fas associated factor 1"/>
    <property type="match status" value="1"/>
</dbReference>
<dbReference type="FunFam" id="3.40.30.10:FF:000061">
    <property type="entry name" value="Fas associated factor 1"/>
    <property type="match status" value="1"/>
</dbReference>
<dbReference type="FunFam" id="1.10.8.10:FF:000045">
    <property type="entry name" value="Putative FAS-associated factor 1"/>
    <property type="match status" value="1"/>
</dbReference>
<dbReference type="Gene3D" id="1.10.8.10">
    <property type="entry name" value="DNA helicase RuvA subunit, C-terminal domain"/>
    <property type="match status" value="1"/>
</dbReference>
<dbReference type="Gene3D" id="3.40.30.10">
    <property type="entry name" value="Glutaredoxin"/>
    <property type="match status" value="1"/>
</dbReference>
<dbReference type="Gene3D" id="3.10.20.90">
    <property type="entry name" value="Phosphatidylinositol 3-kinase Catalytic Subunit, Chain A, domain 1"/>
    <property type="match status" value="3"/>
</dbReference>
<dbReference type="IDEAL" id="IID00401"/>
<dbReference type="InterPro" id="IPR033043">
    <property type="entry name" value="FAF1-like_UBX"/>
</dbReference>
<dbReference type="InterPro" id="IPR049483">
    <property type="entry name" value="FAF1_2-like_UAS"/>
</dbReference>
<dbReference type="InterPro" id="IPR044541">
    <property type="entry name" value="FAF1_UBA"/>
</dbReference>
<dbReference type="InterPro" id="IPR036249">
    <property type="entry name" value="Thioredoxin-like_sf"/>
</dbReference>
<dbReference type="InterPro" id="IPR006577">
    <property type="entry name" value="UAS"/>
</dbReference>
<dbReference type="InterPro" id="IPR029071">
    <property type="entry name" value="Ubiquitin-like_domsf"/>
</dbReference>
<dbReference type="InterPro" id="IPR001012">
    <property type="entry name" value="UBX_dom"/>
</dbReference>
<dbReference type="InterPro" id="IPR050730">
    <property type="entry name" value="UBX_domain-protein"/>
</dbReference>
<dbReference type="PANTHER" id="PTHR23322:SF96">
    <property type="entry name" value="FAS-ASSOCIATED FACTOR 1"/>
    <property type="match status" value="1"/>
</dbReference>
<dbReference type="PANTHER" id="PTHR23322">
    <property type="entry name" value="FAS-ASSOCIATED PROTEIN"/>
    <property type="match status" value="1"/>
</dbReference>
<dbReference type="Pfam" id="PF21021">
    <property type="entry name" value="FAF1"/>
    <property type="match status" value="1"/>
</dbReference>
<dbReference type="Pfam" id="PF14555">
    <property type="entry name" value="UBA_4"/>
    <property type="match status" value="1"/>
</dbReference>
<dbReference type="Pfam" id="PF00789">
    <property type="entry name" value="UBX"/>
    <property type="match status" value="1"/>
</dbReference>
<dbReference type="SMART" id="SM00594">
    <property type="entry name" value="UAS"/>
    <property type="match status" value="1"/>
</dbReference>
<dbReference type="SMART" id="SM00166">
    <property type="entry name" value="UBX"/>
    <property type="match status" value="1"/>
</dbReference>
<dbReference type="SUPFAM" id="SSF52833">
    <property type="entry name" value="Thioredoxin-like"/>
    <property type="match status" value="1"/>
</dbReference>
<dbReference type="SUPFAM" id="SSF54236">
    <property type="entry name" value="Ubiquitin-like"/>
    <property type="match status" value="3"/>
</dbReference>
<dbReference type="PROSITE" id="PS50033">
    <property type="entry name" value="UBX"/>
    <property type="match status" value="1"/>
</dbReference>
<feature type="chain" id="PRO_0000211038" description="FAS-associated factor 1">
    <location>
        <begin position="1"/>
        <end position="650"/>
    </location>
</feature>
<feature type="domain" description="UBA" evidence="5">
    <location>
        <begin position="1"/>
        <end position="57"/>
    </location>
</feature>
<feature type="domain" description="UBX" evidence="2">
    <location>
        <begin position="569"/>
        <end position="646"/>
    </location>
</feature>
<feature type="region of interest" description="Disordered" evidence="3">
    <location>
        <begin position="62"/>
        <end position="87"/>
    </location>
</feature>
<feature type="compositionally biased region" description="Low complexity" evidence="3">
    <location>
        <begin position="68"/>
        <end position="83"/>
    </location>
</feature>
<feature type="modified residue" description="Phosphoserine" evidence="10 11 12">
    <location>
        <position position="320"/>
    </location>
</feature>
<feature type="modified residue" description="Phosphothreonine" evidence="13">
    <location>
        <position position="580"/>
    </location>
</feature>
<feature type="modified residue" description="Phosphoserine" evidence="13">
    <location>
        <position position="582"/>
    </location>
</feature>
<feature type="splice variant" id="VSP_006704" description="In isoform Short." evidence="8">
    <location>
        <begin position="188"/>
        <end position="339"/>
    </location>
</feature>
<feature type="sequence conflict" description="In Ref. 1; AAD51886/AAD51876." evidence="9" ref="1">
    <original>F</original>
    <variation>K</variation>
    <location>
        <position position="448"/>
    </location>
</feature>
<feature type="sequence conflict" description="In Ref. 1; AAD51886/AAD51876." evidence="9" ref="1">
    <original>E</original>
    <variation>G</variation>
    <location>
        <position position="498"/>
    </location>
</feature>
<feature type="sequence conflict" description="In Ref. 1; AAD51886/AAD51876." evidence="9" ref="1">
    <original>H</original>
    <variation>R</variation>
    <location>
        <position position="529"/>
    </location>
</feature>
<feature type="helix" evidence="16">
    <location>
        <begin position="7"/>
        <end position="18"/>
    </location>
</feature>
<feature type="helix" evidence="16">
    <location>
        <begin position="23"/>
        <end position="32"/>
    </location>
</feature>
<feature type="turn" evidence="16">
    <location>
        <begin position="33"/>
        <end position="35"/>
    </location>
</feature>
<feature type="helix" evidence="16">
    <location>
        <begin position="37"/>
        <end position="41"/>
    </location>
</feature>
<feature type="strand" evidence="18">
    <location>
        <begin position="100"/>
        <end position="107"/>
    </location>
</feature>
<feature type="strand" evidence="18">
    <location>
        <begin position="110"/>
        <end position="117"/>
    </location>
</feature>
<feature type="helix" evidence="18">
    <location>
        <begin position="122"/>
        <end position="133"/>
    </location>
</feature>
<feature type="helix" evidence="18">
    <location>
        <begin position="137"/>
        <end position="139"/>
    </location>
</feature>
<feature type="strand" evidence="18">
    <location>
        <begin position="141"/>
        <end position="143"/>
    </location>
</feature>
<feature type="strand" evidence="18">
    <location>
        <begin position="146"/>
        <end position="148"/>
    </location>
</feature>
<feature type="helix" evidence="18">
    <location>
        <begin position="156"/>
        <end position="159"/>
    </location>
</feature>
<feature type="strand" evidence="18">
    <location>
        <begin position="163"/>
        <end position="170"/>
    </location>
</feature>
<feature type="strand" evidence="14">
    <location>
        <begin position="172"/>
        <end position="174"/>
    </location>
</feature>
<feature type="helix" evidence="15">
    <location>
        <begin position="330"/>
        <end position="345"/>
    </location>
</feature>
<feature type="helix" evidence="15">
    <location>
        <begin position="357"/>
        <end position="362"/>
    </location>
</feature>
<feature type="strand" evidence="15">
    <location>
        <begin position="365"/>
        <end position="367"/>
    </location>
</feature>
<feature type="turn" evidence="15">
    <location>
        <begin position="369"/>
        <end position="371"/>
    </location>
</feature>
<feature type="strand" evidence="15">
    <location>
        <begin position="374"/>
        <end position="380"/>
    </location>
</feature>
<feature type="helix" evidence="15">
    <location>
        <begin position="386"/>
        <end position="393"/>
    </location>
</feature>
<feature type="turn" evidence="15">
    <location>
        <begin position="394"/>
        <end position="396"/>
    </location>
</feature>
<feature type="helix" evidence="15">
    <location>
        <begin position="398"/>
        <end position="406"/>
    </location>
</feature>
<feature type="strand" evidence="15">
    <location>
        <begin position="408"/>
        <end position="414"/>
    </location>
</feature>
<feature type="helix" evidence="15">
    <location>
        <begin position="418"/>
        <end position="431"/>
    </location>
</feature>
<feature type="helix" evidence="15">
    <location>
        <begin position="434"/>
        <end position="442"/>
    </location>
</feature>
<feature type="strand" evidence="15">
    <location>
        <begin position="449"/>
        <end position="454"/>
    </location>
</feature>
<feature type="strand" evidence="15">
    <location>
        <begin position="463"/>
        <end position="467"/>
    </location>
</feature>
<feature type="helix" evidence="15">
    <location>
        <begin position="473"/>
        <end position="490"/>
    </location>
</feature>
<feature type="strand" evidence="17">
    <location>
        <begin position="573"/>
        <end position="579"/>
    </location>
</feature>
<feature type="strand" evidence="17">
    <location>
        <begin position="585"/>
        <end position="591"/>
    </location>
</feature>
<feature type="helix" evidence="17">
    <location>
        <begin position="596"/>
        <end position="605"/>
    </location>
</feature>
<feature type="turn" evidence="17">
    <location>
        <begin position="610"/>
        <end position="612"/>
    </location>
</feature>
<feature type="strand" evidence="17">
    <location>
        <begin position="613"/>
        <end position="616"/>
    </location>
</feature>
<feature type="strand" evidence="17">
    <location>
        <begin position="618"/>
        <end position="620"/>
    </location>
</feature>
<feature type="helix" evidence="17">
    <location>
        <begin position="624"/>
        <end position="626"/>
    </location>
</feature>
<feature type="turn" evidence="17">
    <location>
        <begin position="633"/>
        <end position="637"/>
    </location>
</feature>
<feature type="strand" evidence="17">
    <location>
        <begin position="640"/>
        <end position="648"/>
    </location>
</feature>
<comment type="function">
    <text evidence="1 5 7">Ubiquitin-binding protein (PubMed:19722279). Required for the progression of DNA replication forks by targeting DNA replication licensing factor CDT1 for degradation (PubMed:26842564). Potentiates but cannot initiate FAS-induced apoptosis (By similarity).</text>
</comment>
<comment type="subunit">
    <text evidence="4 6 7">Interacts with CDT1 and ATPase VCP/p97 (PubMed:26842564). Interacts (via UBA domain) with FAS (via death domain) (PubMed:10462485). Interacts (via UBA domain) with NLRP12 (via DAPIN/PYRIN domain) (PubMed:21978668).</text>
</comment>
<comment type="interaction">
    <interactant intactId="EBI-718246">
        <id>Q9UNN5</id>
    </interactant>
    <interactant intactId="EBI-747754">
        <id>P28799</id>
        <label>GRN</label>
    </interactant>
    <organismsDiffer>false</organismsDiffer>
    <experiments>3</experiments>
</comment>
<comment type="interaction">
    <interactant intactId="EBI-718246">
        <id>Q9UNN5</id>
    </interactant>
    <interactant intactId="EBI-5235340">
        <id>Q7Z699</id>
        <label>SPRED1</label>
    </interactant>
    <organismsDiffer>false</organismsDiffer>
    <experiments>3</experiments>
</comment>
<comment type="interaction">
    <interactant intactId="EBI-718246">
        <id>Q9UNN5</id>
    </interactant>
    <interactant intactId="EBI-355164">
        <id>P55072</id>
        <label>VCP</label>
    </interactant>
    <organismsDiffer>false</organismsDiffer>
    <experiments>3</experiments>
</comment>
<comment type="interaction">
    <interactant intactId="EBI-718246">
        <id>Q9UNN5</id>
    </interactant>
    <interactant intactId="EBI-2849837">
        <id>Q7Z739</id>
        <label>YTHDF3</label>
    </interactant>
    <organismsDiffer>false</organismsDiffer>
    <experiments>3</experiments>
</comment>
<comment type="interaction">
    <interactant intactId="EBI-15930546">
        <id>Q9UNN5-1</id>
    </interactant>
    <interactant intactId="EBI-355164">
        <id>P55072</id>
        <label>VCP</label>
    </interactant>
    <organismsDiffer>false</organismsDiffer>
    <experiments>4</experiments>
</comment>
<comment type="subcellular location">
    <subcellularLocation>
        <location evidence="7">Nucleus</location>
    </subcellularLocation>
</comment>
<comment type="alternative products">
    <event type="alternative splicing"/>
    <isoform>
        <id>Q9UNN5-1</id>
        <name>Long</name>
        <sequence type="displayed"/>
    </isoform>
    <isoform>
        <id>Q9UNN5-2</id>
        <name>Short</name>
        <name>hFAF1(s)</name>
        <sequence type="described" ref="VSP_006704"/>
    </isoform>
</comment>
<comment type="tissue specificity">
    <text evidence="4">Most abundant in testis, slightly less abundant in skeletal muscle and heart, followed by prostate, thymus, ovary, small intestine, and colon. Not detected in the peripheral blood leukocytes.</text>
</comment>
<comment type="sequence caution" evidence="9">
    <conflict type="erroneous initiation">
        <sequence resource="EMBL-CDS" id="AAD51876"/>
    </conflict>
</comment>
<reference key="1">
    <citation type="journal article" date="1999" name="Biochem. Biophys. Res. Commun.">
        <title>Identification and characterization of human Fas associated factor 1, hFAF1.</title>
        <authorList>
            <person name="Ryu S.-W."/>
            <person name="Chae S.-K."/>
            <person name="Lee K.-J."/>
            <person name="Kim E."/>
        </authorList>
    </citation>
    <scope>NUCLEOTIDE SEQUENCE [MRNA] (ISOFORMS LONG AND SHORT)</scope>
    <scope>INTERACTION WITH FAS</scope>
    <scope>TISSUE SPECIFICITY</scope>
    <source>
        <tissue>Brain</tissue>
        <tissue>Liver</tissue>
    </source>
</reference>
<reference key="2">
    <citation type="submission" date="1999-03" db="EMBL/GenBank/DDBJ databases">
        <title>Cloning of a new human cDNA homologous to Mus musculus FAF1.</title>
        <authorList>
            <person name="Ding J.B."/>
            <person name="Yu L."/>
            <person name="Zhao S.Y."/>
        </authorList>
    </citation>
    <scope>NUCLEOTIDE SEQUENCE [MRNA] (ISOFORM LONG)</scope>
</reference>
<reference key="3">
    <citation type="submission" date="2000-01" db="EMBL/GenBank/DDBJ databases">
        <title>Full length cDNA sequence and chromosomal localization of the human Fas-associated factor 1 gene, hFaf1.</title>
        <authorList>
            <person name="Boldyreff B."/>
        </authorList>
    </citation>
    <scope>NUCLEOTIDE SEQUENCE [MRNA] (ISOFORM LONG)</scope>
</reference>
<reference key="4">
    <citation type="journal article" date="2000" name="Genome Res.">
        <title>Identification of novel human genes evolutionarily conserved in Caenorhabditis elegans by comparative proteomics.</title>
        <authorList>
            <person name="Lai C.-H."/>
            <person name="Chou C.-Y."/>
            <person name="Ch'ang L.-Y."/>
            <person name="Liu C.-S."/>
            <person name="Lin W.-C."/>
        </authorList>
    </citation>
    <scope>NUCLEOTIDE SEQUENCE [LARGE SCALE MRNA] (ISOFORM LONG)</scope>
</reference>
<reference key="5">
    <citation type="journal article" date="2006" name="Nature">
        <title>The DNA sequence and biological annotation of human chromosome 1.</title>
        <authorList>
            <person name="Gregory S.G."/>
            <person name="Barlow K.F."/>
            <person name="McLay K.E."/>
            <person name="Kaul R."/>
            <person name="Swarbreck D."/>
            <person name="Dunham A."/>
            <person name="Scott C.E."/>
            <person name="Howe K.L."/>
            <person name="Woodfine K."/>
            <person name="Spencer C.C.A."/>
            <person name="Jones M.C."/>
            <person name="Gillson C."/>
            <person name="Searle S."/>
            <person name="Zhou Y."/>
            <person name="Kokocinski F."/>
            <person name="McDonald L."/>
            <person name="Evans R."/>
            <person name="Phillips K."/>
            <person name="Atkinson A."/>
            <person name="Cooper R."/>
            <person name="Jones C."/>
            <person name="Hall R.E."/>
            <person name="Andrews T.D."/>
            <person name="Lloyd C."/>
            <person name="Ainscough R."/>
            <person name="Almeida J.P."/>
            <person name="Ambrose K.D."/>
            <person name="Anderson F."/>
            <person name="Andrew R.W."/>
            <person name="Ashwell R.I.S."/>
            <person name="Aubin K."/>
            <person name="Babbage A.K."/>
            <person name="Bagguley C.L."/>
            <person name="Bailey J."/>
            <person name="Beasley H."/>
            <person name="Bethel G."/>
            <person name="Bird C.P."/>
            <person name="Bray-Allen S."/>
            <person name="Brown J.Y."/>
            <person name="Brown A.J."/>
            <person name="Buckley D."/>
            <person name="Burton J."/>
            <person name="Bye J."/>
            <person name="Carder C."/>
            <person name="Chapman J.C."/>
            <person name="Clark S.Y."/>
            <person name="Clarke G."/>
            <person name="Clee C."/>
            <person name="Cobley V."/>
            <person name="Collier R.E."/>
            <person name="Corby N."/>
            <person name="Coville G.J."/>
            <person name="Davies J."/>
            <person name="Deadman R."/>
            <person name="Dunn M."/>
            <person name="Earthrowl M."/>
            <person name="Ellington A.G."/>
            <person name="Errington H."/>
            <person name="Frankish A."/>
            <person name="Frankland J."/>
            <person name="French L."/>
            <person name="Garner P."/>
            <person name="Garnett J."/>
            <person name="Gay L."/>
            <person name="Ghori M.R.J."/>
            <person name="Gibson R."/>
            <person name="Gilby L.M."/>
            <person name="Gillett W."/>
            <person name="Glithero R.J."/>
            <person name="Grafham D.V."/>
            <person name="Griffiths C."/>
            <person name="Griffiths-Jones S."/>
            <person name="Grocock R."/>
            <person name="Hammond S."/>
            <person name="Harrison E.S.I."/>
            <person name="Hart E."/>
            <person name="Haugen E."/>
            <person name="Heath P.D."/>
            <person name="Holmes S."/>
            <person name="Holt K."/>
            <person name="Howden P.J."/>
            <person name="Hunt A.R."/>
            <person name="Hunt S.E."/>
            <person name="Hunter G."/>
            <person name="Isherwood J."/>
            <person name="James R."/>
            <person name="Johnson C."/>
            <person name="Johnson D."/>
            <person name="Joy A."/>
            <person name="Kay M."/>
            <person name="Kershaw J.K."/>
            <person name="Kibukawa M."/>
            <person name="Kimberley A.M."/>
            <person name="King A."/>
            <person name="Knights A.J."/>
            <person name="Lad H."/>
            <person name="Laird G."/>
            <person name="Lawlor S."/>
            <person name="Leongamornlert D.A."/>
            <person name="Lloyd D.M."/>
            <person name="Loveland J."/>
            <person name="Lovell J."/>
            <person name="Lush M.J."/>
            <person name="Lyne R."/>
            <person name="Martin S."/>
            <person name="Mashreghi-Mohammadi M."/>
            <person name="Matthews L."/>
            <person name="Matthews N.S.W."/>
            <person name="McLaren S."/>
            <person name="Milne S."/>
            <person name="Mistry S."/>
            <person name="Moore M.J.F."/>
            <person name="Nickerson T."/>
            <person name="O'Dell C.N."/>
            <person name="Oliver K."/>
            <person name="Palmeiri A."/>
            <person name="Palmer S.A."/>
            <person name="Parker A."/>
            <person name="Patel D."/>
            <person name="Pearce A.V."/>
            <person name="Peck A.I."/>
            <person name="Pelan S."/>
            <person name="Phelps K."/>
            <person name="Phillimore B.J."/>
            <person name="Plumb R."/>
            <person name="Rajan J."/>
            <person name="Raymond C."/>
            <person name="Rouse G."/>
            <person name="Saenphimmachak C."/>
            <person name="Sehra H.K."/>
            <person name="Sheridan E."/>
            <person name="Shownkeen R."/>
            <person name="Sims S."/>
            <person name="Skuce C.D."/>
            <person name="Smith M."/>
            <person name="Steward C."/>
            <person name="Subramanian S."/>
            <person name="Sycamore N."/>
            <person name="Tracey A."/>
            <person name="Tromans A."/>
            <person name="Van Helmond Z."/>
            <person name="Wall M."/>
            <person name="Wallis J.M."/>
            <person name="White S."/>
            <person name="Whitehead S.L."/>
            <person name="Wilkinson J.E."/>
            <person name="Willey D.L."/>
            <person name="Williams H."/>
            <person name="Wilming L."/>
            <person name="Wray P.W."/>
            <person name="Wu Z."/>
            <person name="Coulson A."/>
            <person name="Vaudin M."/>
            <person name="Sulston J.E."/>
            <person name="Durbin R.M."/>
            <person name="Hubbard T."/>
            <person name="Wooster R."/>
            <person name="Dunham I."/>
            <person name="Carter N.P."/>
            <person name="McVean G."/>
            <person name="Ross M.T."/>
            <person name="Harrow J."/>
            <person name="Olson M.V."/>
            <person name="Beck S."/>
            <person name="Rogers J."/>
            <person name="Bentley D.R."/>
        </authorList>
    </citation>
    <scope>NUCLEOTIDE SEQUENCE [LARGE SCALE GENOMIC DNA]</scope>
</reference>
<reference key="6">
    <citation type="submission" date="2005-09" db="EMBL/GenBank/DDBJ databases">
        <authorList>
            <person name="Mural R.J."/>
            <person name="Istrail S."/>
            <person name="Sutton G."/>
            <person name="Florea L."/>
            <person name="Halpern A.L."/>
            <person name="Mobarry C.M."/>
            <person name="Lippert R."/>
            <person name="Walenz B."/>
            <person name="Shatkay H."/>
            <person name="Dew I."/>
            <person name="Miller J.R."/>
            <person name="Flanigan M.J."/>
            <person name="Edwards N.J."/>
            <person name="Bolanos R."/>
            <person name="Fasulo D."/>
            <person name="Halldorsson B.V."/>
            <person name="Hannenhalli S."/>
            <person name="Turner R."/>
            <person name="Yooseph S."/>
            <person name="Lu F."/>
            <person name="Nusskern D.R."/>
            <person name="Shue B.C."/>
            <person name="Zheng X.H."/>
            <person name="Zhong F."/>
            <person name="Delcher A.L."/>
            <person name="Huson D.H."/>
            <person name="Kravitz S.A."/>
            <person name="Mouchard L."/>
            <person name="Reinert K."/>
            <person name="Remington K.A."/>
            <person name="Clark A.G."/>
            <person name="Waterman M.S."/>
            <person name="Eichler E.E."/>
            <person name="Adams M.D."/>
            <person name="Hunkapiller M.W."/>
            <person name="Myers E.W."/>
            <person name="Venter J.C."/>
        </authorList>
    </citation>
    <scope>NUCLEOTIDE SEQUENCE [LARGE SCALE GENOMIC DNA]</scope>
</reference>
<reference key="7">
    <citation type="journal article" date="2004" name="Genome Res.">
        <title>The status, quality, and expansion of the NIH full-length cDNA project: the Mammalian Gene Collection (MGC).</title>
        <authorList>
            <consortium name="The MGC Project Team"/>
        </authorList>
    </citation>
    <scope>NUCLEOTIDE SEQUENCE [LARGE SCALE MRNA] (ISOFORM LONG)</scope>
    <source>
        <tissue>Brain</tissue>
        <tissue>Kidney</tissue>
    </source>
</reference>
<reference key="8">
    <citation type="journal article" date="2007" name="BMC Genomics">
        <title>The full-ORF clone resource of the German cDNA consortium.</title>
        <authorList>
            <person name="Bechtel S."/>
            <person name="Rosenfelder H."/>
            <person name="Duda A."/>
            <person name="Schmidt C.P."/>
            <person name="Ernst U."/>
            <person name="Wellenreuther R."/>
            <person name="Mehrle A."/>
            <person name="Schuster C."/>
            <person name="Bahr A."/>
            <person name="Bloecker H."/>
            <person name="Heubner D."/>
            <person name="Hoerlein A."/>
            <person name="Michel G."/>
            <person name="Wedler H."/>
            <person name="Koehrer K."/>
            <person name="Ottenwaelder B."/>
            <person name="Poustka A."/>
            <person name="Wiemann S."/>
            <person name="Schupp I."/>
        </authorList>
    </citation>
    <scope>NUCLEOTIDE SEQUENCE [LARGE SCALE MRNA] OF 97-650 (ISOFORM LONG)</scope>
    <source>
        <tissue>Testis</tissue>
    </source>
</reference>
<reference key="9">
    <citation type="journal article" date="2008" name="Proc. Natl. Acad. Sci. U.S.A.">
        <title>A quantitative atlas of mitotic phosphorylation.</title>
        <authorList>
            <person name="Dephoure N."/>
            <person name="Zhou C."/>
            <person name="Villen J."/>
            <person name="Beausoleil S.A."/>
            <person name="Bakalarski C.E."/>
            <person name="Elledge S.J."/>
            <person name="Gygi S.P."/>
        </authorList>
    </citation>
    <scope>PHOSPHORYLATION [LARGE SCALE ANALYSIS] AT SER-320</scope>
    <scope>IDENTIFICATION BY MASS SPECTROMETRY [LARGE SCALE ANALYSIS]</scope>
    <source>
        <tissue>Cervix carcinoma</tissue>
    </source>
</reference>
<reference key="10">
    <citation type="journal article" date="2009" name="Sci. Signal.">
        <title>Quantitative phosphoproteomic analysis of T cell receptor signaling reveals system-wide modulation of protein-protein interactions.</title>
        <authorList>
            <person name="Mayya V."/>
            <person name="Lundgren D.H."/>
            <person name="Hwang S.-I."/>
            <person name="Rezaul K."/>
            <person name="Wu L."/>
            <person name="Eng J.K."/>
            <person name="Rodionov V."/>
            <person name="Han D.K."/>
        </authorList>
    </citation>
    <scope>PHOSPHORYLATION [LARGE SCALE ANALYSIS] AT SER-320</scope>
    <scope>IDENTIFICATION BY MASS SPECTROMETRY [LARGE SCALE ANALYSIS]</scope>
    <source>
        <tissue>Leukemic T-cell</tissue>
    </source>
</reference>
<reference key="11">
    <citation type="journal article" date="2010" name="Sci. Signal.">
        <title>Quantitative phosphoproteomics reveals widespread full phosphorylation site occupancy during mitosis.</title>
        <authorList>
            <person name="Olsen J.V."/>
            <person name="Vermeulen M."/>
            <person name="Santamaria A."/>
            <person name="Kumar C."/>
            <person name="Miller M.L."/>
            <person name="Jensen L.J."/>
            <person name="Gnad F."/>
            <person name="Cox J."/>
            <person name="Jensen T.S."/>
            <person name="Nigg E.A."/>
            <person name="Brunak S."/>
            <person name="Mann M."/>
        </authorList>
    </citation>
    <scope>PHOSPHORYLATION [LARGE SCALE ANALYSIS] AT SER-320</scope>
    <scope>IDENTIFICATION BY MASS SPECTROMETRY [LARGE SCALE ANALYSIS]</scope>
    <source>
        <tissue>Cervix carcinoma</tissue>
    </source>
</reference>
<reference key="12">
    <citation type="journal article" date="2011" name="BMC Syst. Biol.">
        <title>Initial characterization of the human central proteome.</title>
        <authorList>
            <person name="Burkard T.R."/>
            <person name="Planyavsky M."/>
            <person name="Kaupe I."/>
            <person name="Breitwieser F.P."/>
            <person name="Buerckstuemmer T."/>
            <person name="Bennett K.L."/>
            <person name="Superti-Furga G."/>
            <person name="Colinge J."/>
        </authorList>
    </citation>
    <scope>IDENTIFICATION BY MASS SPECTROMETRY [LARGE SCALE ANALYSIS]</scope>
</reference>
<reference key="13">
    <citation type="journal article" date="2011" name="J. Mol. Biol.">
        <title>The NLRP12 pyrin domain: structure, dynamics, and functional insights.</title>
        <authorList>
            <person name="Pinheiro A.S."/>
            <person name="Eibl C."/>
            <person name="Ekman-Vural Z."/>
            <person name="Schwarzenbacher R."/>
            <person name="Peti W."/>
        </authorList>
    </citation>
    <scope>INTERACTION WITH NLRP12</scope>
</reference>
<reference key="14">
    <citation type="journal article" date="2013" name="J. Proteome Res.">
        <title>Toward a comprehensive characterization of a human cancer cell phosphoproteome.</title>
        <authorList>
            <person name="Zhou H."/>
            <person name="Di Palma S."/>
            <person name="Preisinger C."/>
            <person name="Peng M."/>
            <person name="Polat A.N."/>
            <person name="Heck A.J."/>
            <person name="Mohammed S."/>
        </authorList>
    </citation>
    <scope>PHOSPHORYLATION [LARGE SCALE ANALYSIS] AT THR-580 AND SER-582</scope>
    <scope>IDENTIFICATION BY MASS SPECTROMETRY [LARGE SCALE ANALYSIS]</scope>
    <source>
        <tissue>Cervix carcinoma</tissue>
        <tissue>Erythroleukemia</tissue>
    </source>
</reference>
<reference key="15">
    <citation type="journal article" date="2016" name="Nat. Commun.">
        <title>Chromatin-associated degradation is defined by UBXN-3/FAF1 to safeguard DNA replication fork progression.</title>
        <authorList>
            <person name="Franz A."/>
            <person name="Pirson P.A."/>
            <person name="Pilger D."/>
            <person name="Halder S."/>
            <person name="Achuthankutty D."/>
            <person name="Kashkar H."/>
            <person name="Ramadan K."/>
            <person name="Hoppe T."/>
        </authorList>
    </citation>
    <scope>FUNCTION</scope>
    <scope>INTERACTION WITH CDT1 AND VCP</scope>
    <scope>SUBCELLULAR LOCATION</scope>
</reference>
<reference key="16">
    <citation type="journal article" date="2001" name="J. Mol. Biol.">
        <title>The UBX domain: a widespread ubiquitin-like module.</title>
        <authorList>
            <person name="Buchberger A."/>
            <person name="Howard M.J."/>
            <person name="Proctor M."/>
            <person name="Bycroft M.M."/>
        </authorList>
    </citation>
    <scope>STRUCTURE BY NMR OF 569-650</scope>
</reference>
<reference key="17">
    <citation type="submission" date="2007-10" db="PDB data bank">
        <title>Solution structure of the ubiquitin-like domain in human FAS-associated factor 1 (hFAF1).</title>
        <authorList>
            <consortium name="RIKEN structural genomics initiative (RSGI)"/>
        </authorList>
    </citation>
    <scope>STRUCTURE BY NMR OF 99-191</scope>
</reference>
<reference key="18">
    <citation type="journal article" date="2009" name="Protein Sci.">
        <title>Structure and interaction of ubiquitin-associated domain of human Fas-associated factor 1.</title>
        <authorList>
            <person name="Song J."/>
            <person name="Park J.K."/>
            <person name="Lee J.J."/>
            <person name="Choi Y.S."/>
            <person name="Ryu K.S."/>
            <person name="Kim J.H."/>
            <person name="Kim E."/>
            <person name="Lee K.J."/>
            <person name="Jeon Y.H."/>
            <person name="Kim E.E."/>
        </authorList>
    </citation>
    <scope>X-RAY CRYSTALLOGRAPHY (1.73 ANGSTROMS) OF 5-47</scope>
    <scope>FUNCTION</scope>
    <scope>DOMAIN UBA</scope>
</reference>
<gene>
    <name type="primary">FAF1</name>
    <name type="synonym">UBXD12</name>
    <name type="synonym">UBXN3A</name>
    <name type="ORF">CGI-03</name>
</gene>
<organism>
    <name type="scientific">Homo sapiens</name>
    <name type="common">Human</name>
    <dbReference type="NCBI Taxonomy" id="9606"/>
    <lineage>
        <taxon>Eukaryota</taxon>
        <taxon>Metazoa</taxon>
        <taxon>Chordata</taxon>
        <taxon>Craniata</taxon>
        <taxon>Vertebrata</taxon>
        <taxon>Euteleostomi</taxon>
        <taxon>Mammalia</taxon>
        <taxon>Eutheria</taxon>
        <taxon>Euarchontoglires</taxon>
        <taxon>Primates</taxon>
        <taxon>Haplorrhini</taxon>
        <taxon>Catarrhini</taxon>
        <taxon>Hominidae</taxon>
        <taxon>Homo</taxon>
    </lineage>
</organism>
<name>FAF1_HUMAN</name>